<dbReference type="EC" id="1.13.11.51" evidence="3 6"/>
<dbReference type="EMBL" id="AB026549">
    <property type="protein sequence ID" value="BAB70609.1"/>
    <property type="molecule type" value="Genomic_DNA"/>
</dbReference>
<dbReference type="EMBL" id="AB028617">
    <property type="protein sequence ID" value="BAB01336.1"/>
    <property type="molecule type" value="Genomic_DNA"/>
</dbReference>
<dbReference type="EMBL" id="CP002686">
    <property type="protein sequence ID" value="AEE75526.1"/>
    <property type="molecule type" value="Genomic_DNA"/>
</dbReference>
<dbReference type="EMBL" id="AY056255">
    <property type="protein sequence ID" value="AAL07104.1"/>
    <property type="molecule type" value="mRNA"/>
</dbReference>
<dbReference type="RefSeq" id="NP_188062.1">
    <property type="nucleotide sequence ID" value="NM_112304.3"/>
</dbReference>
<dbReference type="SMR" id="Q9LRR7"/>
<dbReference type="BioGRID" id="6001">
    <property type="interactions" value="1"/>
</dbReference>
<dbReference type="FunCoup" id="Q9LRR7">
    <property type="interactions" value="28"/>
</dbReference>
<dbReference type="STRING" id="3702.Q9LRR7"/>
<dbReference type="iPTMnet" id="Q9LRR7"/>
<dbReference type="PaxDb" id="3702-AT3G14440.1"/>
<dbReference type="ProteomicsDB" id="251317"/>
<dbReference type="EnsemblPlants" id="AT3G14440.1">
    <property type="protein sequence ID" value="AT3G14440.1"/>
    <property type="gene ID" value="AT3G14440"/>
</dbReference>
<dbReference type="GeneID" id="820667"/>
<dbReference type="Gramene" id="AT3G14440.1">
    <property type="protein sequence ID" value="AT3G14440.1"/>
    <property type="gene ID" value="AT3G14440"/>
</dbReference>
<dbReference type="KEGG" id="ath:AT3G14440"/>
<dbReference type="Araport" id="AT3G14440"/>
<dbReference type="TAIR" id="AT3G14440">
    <property type="gene designation" value="NCED3"/>
</dbReference>
<dbReference type="eggNOG" id="KOG1285">
    <property type="taxonomic scope" value="Eukaryota"/>
</dbReference>
<dbReference type="HOGENOM" id="CLU_016472_0_0_1"/>
<dbReference type="InParanoid" id="Q9LRR7"/>
<dbReference type="OMA" id="ASYRNRW"/>
<dbReference type="PhylomeDB" id="Q9LRR7"/>
<dbReference type="BioCyc" id="ARA:AT3G14440-MONOMER"/>
<dbReference type="BioCyc" id="MetaCyc:AT3G14440-MONOMER"/>
<dbReference type="BRENDA" id="1.13.11.51">
    <property type="organism ID" value="399"/>
</dbReference>
<dbReference type="UniPathway" id="UPA00090"/>
<dbReference type="PRO" id="PR:Q9LRR7"/>
<dbReference type="Proteomes" id="UP000006548">
    <property type="component" value="Chromosome 3"/>
</dbReference>
<dbReference type="ExpressionAtlas" id="Q9LRR7">
    <property type="expression patterns" value="baseline and differential"/>
</dbReference>
<dbReference type="GO" id="GO:0009570">
    <property type="term" value="C:chloroplast stroma"/>
    <property type="evidence" value="ECO:0000314"/>
    <property type="project" value="TAIR"/>
</dbReference>
<dbReference type="GO" id="GO:0009535">
    <property type="term" value="C:chloroplast thylakoid membrane"/>
    <property type="evidence" value="ECO:0000314"/>
    <property type="project" value="TAIR"/>
</dbReference>
<dbReference type="GO" id="GO:0045549">
    <property type="term" value="F:9-cis-epoxycarotenoid dioxygenase activity"/>
    <property type="evidence" value="ECO:0000314"/>
    <property type="project" value="TAIR"/>
</dbReference>
<dbReference type="GO" id="GO:0046872">
    <property type="term" value="F:metal ion binding"/>
    <property type="evidence" value="ECO:0007669"/>
    <property type="project" value="UniProtKB-KW"/>
</dbReference>
<dbReference type="GO" id="GO:0009688">
    <property type="term" value="P:abscisic acid biosynthetic process"/>
    <property type="evidence" value="ECO:0000315"/>
    <property type="project" value="TAIR"/>
</dbReference>
<dbReference type="GO" id="GO:0042538">
    <property type="term" value="P:hyperosmotic salinity response"/>
    <property type="evidence" value="ECO:0000315"/>
    <property type="project" value="TAIR"/>
</dbReference>
<dbReference type="GO" id="GO:0006970">
    <property type="term" value="P:response to osmotic stress"/>
    <property type="evidence" value="ECO:0000315"/>
    <property type="project" value="TAIR"/>
</dbReference>
<dbReference type="GO" id="GO:0009414">
    <property type="term" value="P:response to water deprivation"/>
    <property type="evidence" value="ECO:0000315"/>
    <property type="project" value="TAIR"/>
</dbReference>
<dbReference type="InterPro" id="IPR004294">
    <property type="entry name" value="Carotenoid_Oase"/>
</dbReference>
<dbReference type="PANTHER" id="PTHR10543:SF26">
    <property type="entry name" value="9-CIS-EPOXYCAROTENOID DIOXYGENASE NCED3, CHLOROPLASTIC"/>
    <property type="match status" value="1"/>
</dbReference>
<dbReference type="PANTHER" id="PTHR10543">
    <property type="entry name" value="BETA-CAROTENE DIOXYGENASE"/>
    <property type="match status" value="1"/>
</dbReference>
<dbReference type="Pfam" id="PF03055">
    <property type="entry name" value="RPE65"/>
    <property type="match status" value="1"/>
</dbReference>
<protein>
    <recommendedName>
        <fullName evidence="10">9-cis-epoxycarotenoid dioxygenase NCED3, chloroplastic</fullName>
        <shortName evidence="10">AtNCED3</shortName>
        <ecNumber evidence="3 6">1.13.11.51</ecNumber>
    </recommendedName>
    <alternativeName>
        <fullName evidence="11">Protein SALT TOLERANT 1</fullName>
    </alternativeName>
</protein>
<evidence type="ECO:0000250" key="1">
    <source>
        <dbReference type="UniProtKB" id="O24592"/>
    </source>
</evidence>
<evidence type="ECO:0000255" key="2"/>
<evidence type="ECO:0000269" key="3">
    <source>
    </source>
</evidence>
<evidence type="ECO:0000269" key="4">
    <source>
    </source>
</evidence>
<evidence type="ECO:0000269" key="5">
    <source>
    </source>
</evidence>
<evidence type="ECO:0000269" key="6">
    <source>
    </source>
</evidence>
<evidence type="ECO:0000269" key="7">
    <source>
    </source>
</evidence>
<evidence type="ECO:0000269" key="8">
    <source>
    </source>
</evidence>
<evidence type="ECO:0000269" key="9">
    <source>
    </source>
</evidence>
<evidence type="ECO:0000303" key="10">
    <source>
    </source>
</evidence>
<evidence type="ECO:0000303" key="11">
    <source>
    </source>
</evidence>
<evidence type="ECO:0000305" key="12"/>
<evidence type="ECO:0000312" key="13">
    <source>
        <dbReference type="Araport" id="AT3G14440"/>
    </source>
</evidence>
<evidence type="ECO:0000312" key="14">
    <source>
        <dbReference type="EMBL" id="BAB01336.1"/>
    </source>
</evidence>
<gene>
    <name evidence="10" type="primary">NCED3</name>
    <name evidence="11" type="synonym">STO1</name>
    <name evidence="13" type="ordered locus">At3g14440</name>
    <name evidence="14" type="ORF">MOA2.4</name>
</gene>
<keyword id="KW-0937">Abscisic acid biosynthesis</keyword>
<keyword id="KW-0150">Chloroplast</keyword>
<keyword id="KW-0223">Dioxygenase</keyword>
<keyword id="KW-0408">Iron</keyword>
<keyword id="KW-0479">Metal-binding</keyword>
<keyword id="KW-0560">Oxidoreductase</keyword>
<keyword id="KW-0934">Plastid</keyword>
<keyword id="KW-1185">Reference proteome</keyword>
<keyword id="KW-0346">Stress response</keyword>
<keyword id="KW-0809">Transit peptide</keyword>
<name>NCED3_ARATH</name>
<accession>Q9LRR7</accession>
<accession>Q93ZU5</accession>
<sequence length="599" mass="65857">MASFTATAAVSGRWLGGNHTQPPLSSSQSSDLSYCSSLPMASRVTRKLNVSSALHTPPALHFPKQSSNSPAIVVKPKAKESNTKQMNLFQRAAAAALDAAEGFLVSHEKLHPLPKTADPSVQIAGNFAPVNEQPVRRNLPVVGKLPDSIKGVYVRNGANPLHEPVTGHHFFDGDGMVHAVKFEHGSASYACRFTQTNRFVQERQLGRPVFPKAIGELHGHTGIARLMLFYARAAAGIVDPAHGTGVANAGLVYFNGRLLAMSEDDLPYQVQITPNGDLKTVGRFDFDGQLESTMIAHPKVDPESGELFALSYDVVSKPYLKYFRFSPDGTKSPDVEIQLDQPTMMHDFAITENFVVVPDQQVVFKLPEMIRGGSPVVYDKNKVARFGILDKYAEDSSNIKWIDAPDCFCFHLWNAWEEPETDEVVVIGSCMTPPDSIFNESDENLKSVLSEIRLNLKTGESTRRPIISNEDQQVNLEAGMVNRNMLGRKTKFAYLALAEPWPKVSGFAKVDLTTGEVKKHLYGDNRYGGEPLFLPGEGGEEDEGYILCFVHDEKTWKSELQIVNAVSLEVEATVKLPSRVPYGFHGTFIGADDLAKQVV</sequence>
<organism>
    <name type="scientific">Arabidopsis thaliana</name>
    <name type="common">Mouse-ear cress</name>
    <dbReference type="NCBI Taxonomy" id="3702"/>
    <lineage>
        <taxon>Eukaryota</taxon>
        <taxon>Viridiplantae</taxon>
        <taxon>Streptophyta</taxon>
        <taxon>Embryophyta</taxon>
        <taxon>Tracheophyta</taxon>
        <taxon>Spermatophyta</taxon>
        <taxon>Magnoliopsida</taxon>
        <taxon>eudicotyledons</taxon>
        <taxon>Gunneridae</taxon>
        <taxon>Pentapetalae</taxon>
        <taxon>rosids</taxon>
        <taxon>malvids</taxon>
        <taxon>Brassicales</taxon>
        <taxon>Brassicaceae</taxon>
        <taxon>Camelineae</taxon>
        <taxon>Arabidopsis</taxon>
    </lineage>
</organism>
<reference key="1">
    <citation type="journal article" date="2001" name="Plant J.">
        <title>Regulation of drought tolerance by gene manipulation of 9-cis-epoxycarotenoid dioxygenase, a key enzyme in abscisic acid biosynthesis in Arabidopsis.</title>
        <authorList>
            <person name="Iuchi S."/>
            <person name="Kobayashi M."/>
            <person name="Taji T."/>
            <person name="Naramoto M."/>
            <person name="Seki M."/>
            <person name="Kato T."/>
            <person name="Tabata S."/>
            <person name="Kakubari Y."/>
            <person name="Yamaguchi-Shinozaki K."/>
            <person name="Shinozaki K."/>
        </authorList>
    </citation>
    <scope>NUCLEOTIDE SEQUENCE [GENOMIC DNA]</scope>
    <scope>FUNCTION</scope>
    <scope>INDUCTION BY DROUGHT STRESS</scope>
    <scope>DISRUPTION PHENOTYPE</scope>
    <scope>CATALYTIC ACTIVITY</scope>
    <scope>PATHWAY</scope>
</reference>
<reference key="2">
    <citation type="journal article" date="2000" name="DNA Res.">
        <title>Structural analysis of Arabidopsis thaliana chromosome 3. I. Sequence features of the regions of 4,504,864 bp covered by sixty P1 and TAC clones.</title>
        <authorList>
            <person name="Sato S."/>
            <person name="Nakamura Y."/>
            <person name="Kaneko T."/>
            <person name="Katoh T."/>
            <person name="Asamizu E."/>
            <person name="Tabata S."/>
        </authorList>
    </citation>
    <scope>NUCLEOTIDE SEQUENCE [LARGE SCALE GENOMIC DNA]</scope>
    <source>
        <strain>cv. Columbia</strain>
    </source>
</reference>
<reference key="3">
    <citation type="journal article" date="2017" name="Plant J.">
        <title>Araport11: a complete reannotation of the Arabidopsis thaliana reference genome.</title>
        <authorList>
            <person name="Cheng C.Y."/>
            <person name="Krishnakumar V."/>
            <person name="Chan A.P."/>
            <person name="Thibaud-Nissen F."/>
            <person name="Schobel S."/>
            <person name="Town C.D."/>
        </authorList>
    </citation>
    <scope>GENOME REANNOTATION</scope>
    <source>
        <strain>cv. Columbia</strain>
    </source>
</reference>
<reference key="4">
    <citation type="journal article" date="2003" name="Science">
        <title>Empirical analysis of transcriptional activity in the Arabidopsis genome.</title>
        <authorList>
            <person name="Yamada K."/>
            <person name="Lim J."/>
            <person name="Dale J.M."/>
            <person name="Chen H."/>
            <person name="Shinn P."/>
            <person name="Palm C.J."/>
            <person name="Southwick A.M."/>
            <person name="Wu H.C."/>
            <person name="Kim C.J."/>
            <person name="Nguyen M."/>
            <person name="Pham P.K."/>
            <person name="Cheuk R.F."/>
            <person name="Karlin-Newmann G."/>
            <person name="Liu S.X."/>
            <person name="Lam B."/>
            <person name="Sakano H."/>
            <person name="Wu T."/>
            <person name="Yu G."/>
            <person name="Miranda M."/>
            <person name="Quach H.L."/>
            <person name="Tripp M."/>
            <person name="Chang C.H."/>
            <person name="Lee J.M."/>
            <person name="Toriumi M.J."/>
            <person name="Chan M.M."/>
            <person name="Tang C.C."/>
            <person name="Onodera C.S."/>
            <person name="Deng J.M."/>
            <person name="Akiyama K."/>
            <person name="Ansari Y."/>
            <person name="Arakawa T."/>
            <person name="Banh J."/>
            <person name="Banno F."/>
            <person name="Bowser L."/>
            <person name="Brooks S.Y."/>
            <person name="Carninci P."/>
            <person name="Chao Q."/>
            <person name="Choy N."/>
            <person name="Enju A."/>
            <person name="Goldsmith A.D."/>
            <person name="Gurjal M."/>
            <person name="Hansen N.F."/>
            <person name="Hayashizaki Y."/>
            <person name="Johnson-Hopson C."/>
            <person name="Hsuan V.W."/>
            <person name="Iida K."/>
            <person name="Karnes M."/>
            <person name="Khan S."/>
            <person name="Koesema E."/>
            <person name="Ishida J."/>
            <person name="Jiang P.X."/>
            <person name="Jones T."/>
            <person name="Kawai J."/>
            <person name="Kamiya A."/>
            <person name="Meyers C."/>
            <person name="Nakajima M."/>
            <person name="Narusaka M."/>
            <person name="Seki M."/>
            <person name="Sakurai T."/>
            <person name="Satou M."/>
            <person name="Tamse R."/>
            <person name="Vaysberg M."/>
            <person name="Wallender E.K."/>
            <person name="Wong C."/>
            <person name="Yamamura Y."/>
            <person name="Yuan S."/>
            <person name="Shinozaki K."/>
            <person name="Davis R.W."/>
            <person name="Theologis A."/>
            <person name="Ecker J.R."/>
        </authorList>
    </citation>
    <scope>NUCLEOTIDE SEQUENCE [LARGE SCALE MRNA]</scope>
    <source>
        <strain>cv. Columbia</strain>
    </source>
</reference>
<reference key="5">
    <citation type="journal article" date="2003" name="Plant J.">
        <title>Molecular characterization of the Arabidopsis 9-cis epoxycarotenoid dioxygenase gene family.</title>
        <authorList>
            <person name="Tan B.-C."/>
            <person name="Joseph L.M."/>
            <person name="Deng W.-T."/>
            <person name="Liu L."/>
            <person name="Li Q.-B."/>
            <person name="Cline K."/>
            <person name="McCarty D.R."/>
        </authorList>
    </citation>
    <scope>SUBCELLULAR LOCATION</scope>
    <scope>TISSUE SPECIFICITY</scope>
    <scope>INDUCTION BY DROUGHT STRESS</scope>
</reference>
<reference key="6">
    <citation type="journal article" date="2004" name="Plant Physiol.">
        <title>Uncoupling the effects of abscisic acid on plant growth and water relations. Analysis of sto1/nced3, an abscisic acid-deficient but salt stress-tolerant mutant in Arabidopsis.</title>
        <authorList>
            <person name="Ruggiero B."/>
            <person name="Koiwa H."/>
            <person name="Manabe Y."/>
            <person name="Quist T.M."/>
            <person name="Inan G."/>
            <person name="Saccardo F."/>
            <person name="Joly R.J."/>
            <person name="Hasegawa P.M."/>
            <person name="Bressan R.A."/>
            <person name="Maggio A."/>
        </authorList>
    </citation>
    <scope>FUNCTION</scope>
    <scope>TISSUE SPECIFICITY</scope>
    <scope>INDUCTION BY SALT STRESS</scope>
    <scope>CATALYTIC ACTIVITY</scope>
    <scope>PATHWAY</scope>
</reference>
<reference key="7">
    <citation type="journal article" date="2004" name="Plant Physiol.">
        <title>A novel inhibitor of 9-cis-epoxycarotenoid dioxygenase in abscisic acid biosynthesis in higher plants.</title>
        <authorList>
            <person name="Han S.Y."/>
            <person name="Kitahata N."/>
            <person name="Sekimata K."/>
            <person name="Saito T."/>
            <person name="Kobayashi M."/>
            <person name="Nakashima K."/>
            <person name="Yamaguchi-Shinozaki K."/>
            <person name="Shinozaki K."/>
            <person name="Yoshida S."/>
            <person name="Asami T."/>
        </authorList>
    </citation>
    <scope>ACTIVITY REGULATION</scope>
</reference>
<reference key="8">
    <citation type="journal article" date="2006" name="Bioorg. Med. Chem.">
        <title>A 9-cis-epoxycarotenoid dioxygenase inhibitor for use in the elucidation of abscisic acid action mechanisms.</title>
        <authorList>
            <person name="Kitahata N."/>
            <person name="Han S.Y."/>
            <person name="Noji N."/>
            <person name="Saito T."/>
            <person name="Kobayashi M."/>
            <person name="Nakano T."/>
            <person name="Kuchitsu K."/>
            <person name="Shinozaki K."/>
            <person name="Yoshida S."/>
            <person name="Matsumoto S."/>
            <person name="Tsujimoto M."/>
            <person name="Asami T."/>
        </authorList>
    </citation>
    <scope>ACTIVITY REGULATION</scope>
</reference>
<reference key="9">
    <citation type="journal article" date="2006" name="Plant J.">
        <title>Functional analysis of Arabidopsis NCED6 and NCED9 genes indicates that ABA synthesized in the endosperm is involved in the induction of seed dormancy.</title>
        <authorList>
            <person name="Lefebvre V."/>
            <person name="North H."/>
            <person name="Frey A."/>
            <person name="Sotta B."/>
            <person name="Seo M."/>
            <person name="Okamoto M."/>
            <person name="Nambara E."/>
            <person name="Marion-Poll A."/>
        </authorList>
    </citation>
    <scope>TISSUE SPECIFICITY</scope>
</reference>
<reference key="10">
    <citation type="journal article" date="2007" name="EMBO J.">
        <title>Pseudomonas syringae pv. tomato hijacks the Arabidopsis abscisic acid signalling pathway to cause disease.</title>
        <authorList>
            <person name="de Torres-Zabala M."/>
            <person name="Truman W."/>
            <person name="Bennett M.H."/>
            <person name="Lafforgue G."/>
            <person name="Mansfield J.W."/>
            <person name="Rodriguez Egea P."/>
            <person name="Boegre L."/>
            <person name="Grant M."/>
        </authorList>
    </citation>
    <scope>INDUCTION BY PATHOGEN</scope>
</reference>
<comment type="function">
    <text evidence="3 6">Has a 11,12(11',12') 9-cis epoxycarotenoid cleavage activity. Catalyzes the first step of abscisic-acid biosynthesis from carotenoids, in response to water stress.</text>
</comment>
<comment type="catalytic activity">
    <reaction evidence="3 6">
        <text>a 9-cis-epoxycarotenoid + O2 = a 12'-apo-carotenal + 2-cis,4-trans-xanthoxin</text>
        <dbReference type="Rhea" id="RHEA:23328"/>
        <dbReference type="ChEBI" id="CHEBI:15379"/>
        <dbReference type="ChEBI" id="CHEBI:32304"/>
        <dbReference type="ChEBI" id="CHEBI:51972"/>
        <dbReference type="ChEBI" id="CHEBI:51973"/>
        <dbReference type="EC" id="1.13.11.51"/>
    </reaction>
</comment>
<comment type="catalytic activity">
    <reaction evidence="3 6">
        <text>9-cis-violaxanthin + O2 = (3S,5R,6S)-5,6-epoxy-3-hydroxy-5,6-dihydro-12'-apo-beta-caroten-12'-al + 2-cis,4-trans-xanthoxin</text>
        <dbReference type="Rhea" id="RHEA:16541"/>
        <dbReference type="ChEBI" id="CHEBI:15379"/>
        <dbReference type="ChEBI" id="CHEBI:32304"/>
        <dbReference type="ChEBI" id="CHEBI:34597"/>
        <dbReference type="ChEBI" id="CHEBI:35305"/>
        <dbReference type="EC" id="1.13.11.51"/>
    </reaction>
</comment>
<comment type="catalytic activity">
    <reaction evidence="3 6">
        <text>9'-cis-neoxanthin + O2 = (3S,5R,6R)-3,5-dihydroxy-6,7-didehydro-5,6-dihydro-12'-apo-beta-caroten-12'-al + 2-cis,4-trans-xanthoxin</text>
        <dbReference type="Rhea" id="RHEA:19677"/>
        <dbReference type="ChEBI" id="CHEBI:15379"/>
        <dbReference type="ChEBI" id="CHEBI:32304"/>
        <dbReference type="ChEBI" id="CHEBI:34596"/>
        <dbReference type="ChEBI" id="CHEBI:35306"/>
        <dbReference type="EC" id="1.13.11.51"/>
    </reaction>
</comment>
<comment type="cofactor">
    <cofactor evidence="1">
        <name>Fe(2+)</name>
        <dbReference type="ChEBI" id="CHEBI:29033"/>
    </cofactor>
    <text evidence="1">Binds 1 Fe(2+) ion per subunit.</text>
</comment>
<comment type="activity regulation">
    <text evidence="5 8">Inhibited by abamine and abamineSG.</text>
</comment>
<comment type="pathway">
    <text evidence="3 6">Plant hormone biosynthesis; abscisate biosynthesis.</text>
</comment>
<comment type="subcellular location">
    <subcellularLocation>
        <location evidence="4">Plastid</location>
        <location evidence="4">Chloroplast stroma</location>
    </subcellularLocation>
    <text>Partially bound to the thylakoid.</text>
</comment>
<comment type="tissue specificity">
    <text evidence="4 6 7">Localized in roots, leaves, stems, empty silique envelopes and seeds. Expressed at the point of organ attachment and the abscission zones in the plant.</text>
</comment>
<comment type="induction">
    <text evidence="3 4 6 9">By salt or drought stress and pathogen.</text>
</comment>
<comment type="disruption phenotype">
    <text evidence="3">Plants show enhanced germination on salt and hypersensitivity to desiccation and LiCl.</text>
</comment>
<comment type="miscellaneous">
    <text evidence="6">Overexpression of NCED3 results in increased accumulation of abscisic acid and resistance to water stress.</text>
</comment>
<comment type="similarity">
    <text evidence="12">Belongs to the carotenoid oxygenase family.</text>
</comment>
<feature type="transit peptide" description="Chloroplast" evidence="2">
    <location>
        <begin position="1"/>
        <end position="40"/>
    </location>
</feature>
<feature type="chain" id="PRO_0000285991" description="9-cis-epoxycarotenoid dioxygenase NCED3, chloroplastic">
    <location>
        <begin position="41"/>
        <end position="599"/>
    </location>
</feature>
<feature type="binding site" evidence="1">
    <location>
        <position position="297"/>
    </location>
    <ligand>
        <name>Fe cation</name>
        <dbReference type="ChEBI" id="CHEBI:24875"/>
    </ligand>
</feature>
<feature type="binding site" evidence="1">
    <location>
        <position position="346"/>
    </location>
    <ligand>
        <name>Fe cation</name>
        <dbReference type="ChEBI" id="CHEBI:24875"/>
    </ligand>
</feature>
<feature type="binding site" evidence="1">
    <location>
        <position position="411"/>
    </location>
    <ligand>
        <name>Fe cation</name>
        <dbReference type="ChEBI" id="CHEBI:24875"/>
    </ligand>
</feature>
<feature type="binding site" evidence="1">
    <location>
        <position position="585"/>
    </location>
    <ligand>
        <name>Fe cation</name>
        <dbReference type="ChEBI" id="CHEBI:24875"/>
    </ligand>
</feature>
<feature type="sequence conflict" description="In Ref. 4; AAL07104." evidence="12" ref="4">
    <original>R</original>
    <variation>L</variation>
    <location>
        <position position="371"/>
    </location>
</feature>
<proteinExistence type="evidence at protein level"/>